<evidence type="ECO:0000255" key="1">
    <source>
        <dbReference type="HAMAP-Rule" id="MF_00385"/>
    </source>
</evidence>
<evidence type="ECO:0000305" key="2"/>
<feature type="chain" id="PRO_1000205756" description="Small ribosomal subunit protein bS16">
    <location>
        <begin position="1"/>
        <end position="82"/>
    </location>
</feature>
<dbReference type="EMBL" id="CP001396">
    <property type="protein sequence ID" value="ACR61788.1"/>
    <property type="molecule type" value="Genomic_DNA"/>
</dbReference>
<dbReference type="RefSeq" id="WP_000256450.1">
    <property type="nucleotide sequence ID" value="NC_012759.1"/>
</dbReference>
<dbReference type="SMR" id="C4ZYM7"/>
<dbReference type="GeneID" id="93774459"/>
<dbReference type="KEGG" id="ebw:BWG_2368"/>
<dbReference type="HOGENOM" id="CLU_100590_5_1_6"/>
<dbReference type="GO" id="GO:0005737">
    <property type="term" value="C:cytoplasm"/>
    <property type="evidence" value="ECO:0007669"/>
    <property type="project" value="UniProtKB-ARBA"/>
</dbReference>
<dbReference type="GO" id="GO:0015935">
    <property type="term" value="C:small ribosomal subunit"/>
    <property type="evidence" value="ECO:0007669"/>
    <property type="project" value="TreeGrafter"/>
</dbReference>
<dbReference type="GO" id="GO:0003735">
    <property type="term" value="F:structural constituent of ribosome"/>
    <property type="evidence" value="ECO:0007669"/>
    <property type="project" value="InterPro"/>
</dbReference>
<dbReference type="GO" id="GO:0006412">
    <property type="term" value="P:translation"/>
    <property type="evidence" value="ECO:0007669"/>
    <property type="project" value="UniProtKB-UniRule"/>
</dbReference>
<dbReference type="FunFam" id="3.30.1320.10:FF:000001">
    <property type="entry name" value="30S ribosomal protein S16"/>
    <property type="match status" value="1"/>
</dbReference>
<dbReference type="Gene3D" id="3.30.1320.10">
    <property type="match status" value="1"/>
</dbReference>
<dbReference type="HAMAP" id="MF_00385">
    <property type="entry name" value="Ribosomal_bS16"/>
    <property type="match status" value="1"/>
</dbReference>
<dbReference type="InterPro" id="IPR000307">
    <property type="entry name" value="Ribosomal_bS16"/>
</dbReference>
<dbReference type="InterPro" id="IPR020592">
    <property type="entry name" value="Ribosomal_bS16_CS"/>
</dbReference>
<dbReference type="InterPro" id="IPR023803">
    <property type="entry name" value="Ribosomal_bS16_dom_sf"/>
</dbReference>
<dbReference type="NCBIfam" id="TIGR00002">
    <property type="entry name" value="S16"/>
    <property type="match status" value="1"/>
</dbReference>
<dbReference type="PANTHER" id="PTHR12919">
    <property type="entry name" value="30S RIBOSOMAL PROTEIN S16"/>
    <property type="match status" value="1"/>
</dbReference>
<dbReference type="PANTHER" id="PTHR12919:SF20">
    <property type="entry name" value="SMALL RIBOSOMAL SUBUNIT PROTEIN BS16M"/>
    <property type="match status" value="1"/>
</dbReference>
<dbReference type="Pfam" id="PF00886">
    <property type="entry name" value="Ribosomal_S16"/>
    <property type="match status" value="1"/>
</dbReference>
<dbReference type="SUPFAM" id="SSF54565">
    <property type="entry name" value="Ribosomal protein S16"/>
    <property type="match status" value="1"/>
</dbReference>
<dbReference type="PROSITE" id="PS00732">
    <property type="entry name" value="RIBOSOMAL_S16"/>
    <property type="match status" value="1"/>
</dbReference>
<reference key="1">
    <citation type="journal article" date="2009" name="J. Bacteriol.">
        <title>Genomic sequencing reveals regulatory mutations and recombinational events in the widely used MC4100 lineage of Escherichia coli K-12.</title>
        <authorList>
            <person name="Ferenci T."/>
            <person name="Zhou Z."/>
            <person name="Betteridge T."/>
            <person name="Ren Y."/>
            <person name="Liu Y."/>
            <person name="Feng L."/>
            <person name="Reeves P.R."/>
            <person name="Wang L."/>
        </authorList>
    </citation>
    <scope>NUCLEOTIDE SEQUENCE [LARGE SCALE GENOMIC DNA]</scope>
    <source>
        <strain>K12 / MC4100 / BW2952</strain>
    </source>
</reference>
<protein>
    <recommendedName>
        <fullName evidence="1">Small ribosomal subunit protein bS16</fullName>
    </recommendedName>
    <alternativeName>
        <fullName evidence="2">30S ribosomal protein S16</fullName>
    </alternativeName>
</protein>
<keyword id="KW-0687">Ribonucleoprotein</keyword>
<keyword id="KW-0689">Ribosomal protein</keyword>
<proteinExistence type="inferred from homology"/>
<accession>C4ZYM7</accession>
<comment type="similarity">
    <text evidence="1">Belongs to the bacterial ribosomal protein bS16 family.</text>
</comment>
<name>RS16_ECOBW</name>
<gene>
    <name evidence="1" type="primary">rpsP</name>
    <name type="ordered locus">BWG_2368</name>
</gene>
<sequence length="82" mass="9191">MVTIRLARHGAKKRPFYQVVVADSRNARNGRFIERVGFFNPIASEKEEGTRLDLDRIAHWVGQGATISDRVAALIKEVNKAA</sequence>
<organism>
    <name type="scientific">Escherichia coli (strain K12 / MC4100 / BW2952)</name>
    <dbReference type="NCBI Taxonomy" id="595496"/>
    <lineage>
        <taxon>Bacteria</taxon>
        <taxon>Pseudomonadati</taxon>
        <taxon>Pseudomonadota</taxon>
        <taxon>Gammaproteobacteria</taxon>
        <taxon>Enterobacterales</taxon>
        <taxon>Enterobacteriaceae</taxon>
        <taxon>Escherichia</taxon>
    </lineage>
</organism>